<protein>
    <recommendedName>
        <fullName evidence="1">Uracil phosphoribosyltransferase</fullName>
        <ecNumber evidence="1">2.4.2.9</ecNumber>
    </recommendedName>
    <alternativeName>
        <fullName evidence="1">UMP pyrophosphorylase</fullName>
    </alternativeName>
    <alternativeName>
        <fullName evidence="1">UPRTase</fullName>
    </alternativeName>
</protein>
<reference key="1">
    <citation type="journal article" date="1997" name="Protein Expr. Purif.">
        <title>Recombinant uracil phosphoribosyltransferase from the thermophile Bacillus caldolyticus: expression, purification, and partial characterization.</title>
        <authorList>
            <person name="Jensen H.K."/>
            <person name="Mikkelsen N."/>
            <person name="Neuhard J."/>
        </authorList>
    </citation>
    <scope>NUCLEOTIDE SEQUENCE [GENOMIC DNA]</scope>
    <source>
        <strain>DSM 405 / NBRC 15313 / YP-T</strain>
    </source>
</reference>
<reference key="2">
    <citation type="journal article" date="2002" name="Acta Crystallogr. D">
        <title>Structure of product-bound Bacillus caldolyticus uracil phosphoribosyltransferase confirms ordered sequential substrate binding.</title>
        <authorList>
            <person name="Kadziola A."/>
            <person name="Neuhard J."/>
            <person name="Larsen S."/>
        </authorList>
    </citation>
    <scope>X-RAY CRYSTALLOGRAPHY (3.0 ANGSTROMS) OF COMPLEX WITH UMP</scope>
    <scope>CATALYTIC ACTIVITY</scope>
    <scope>FUNCTION</scope>
    <scope>BIOPHYSICOCHEMICAL PROPERTIES</scope>
</reference>
<evidence type="ECO:0000255" key="1">
    <source>
        <dbReference type="HAMAP-Rule" id="MF_01218"/>
    </source>
</evidence>
<evidence type="ECO:0000269" key="2">
    <source>
    </source>
</evidence>
<evidence type="ECO:0007829" key="3">
    <source>
        <dbReference type="PDB" id="1I5E"/>
    </source>
</evidence>
<organism>
    <name type="scientific">Bacillus caldolyticus</name>
    <dbReference type="NCBI Taxonomy" id="1394"/>
    <lineage>
        <taxon>Bacteria</taxon>
        <taxon>Bacillati</taxon>
        <taxon>Bacillota</taxon>
        <taxon>Bacilli</taxon>
        <taxon>Bacillales</taxon>
        <taxon>Anoxybacillaceae</taxon>
        <taxon>Geobacillus</taxon>
        <taxon>Geobacillus thermoleovorans group</taxon>
    </lineage>
</organism>
<name>UPP_BACCL</name>
<comment type="function">
    <text evidence="1 2">Catalyzes the conversion of uracil and 5-phospho-alpha-D-ribose 1-diphosphate (PRPP) to UMP and diphosphate.</text>
</comment>
<comment type="catalytic activity">
    <reaction evidence="1 2">
        <text>UMP + diphosphate = 5-phospho-alpha-D-ribose 1-diphosphate + uracil</text>
        <dbReference type="Rhea" id="RHEA:13017"/>
        <dbReference type="ChEBI" id="CHEBI:17568"/>
        <dbReference type="ChEBI" id="CHEBI:33019"/>
        <dbReference type="ChEBI" id="CHEBI:57865"/>
        <dbReference type="ChEBI" id="CHEBI:58017"/>
        <dbReference type="EC" id="2.4.2.9"/>
    </reaction>
</comment>
<comment type="cofactor">
    <cofactor evidence="1">
        <name>Mg(2+)</name>
        <dbReference type="ChEBI" id="CHEBI:18420"/>
    </cofactor>
    <text evidence="1">Binds 1 Mg(2+) ion per subunit. The magnesium is bound as Mg-PRPP.</text>
</comment>
<comment type="activity regulation">
    <text evidence="1">Allosterically activated by GTP.</text>
</comment>
<comment type="biophysicochemical properties">
    <kinetics>
        <KM evidence="2">0.9 uM for uracil</KM>
        <KM evidence="2">37 uM for 5-phospho-alpha-D-ribose 1-diphosphate</KM>
    </kinetics>
</comment>
<comment type="pathway">
    <text evidence="1">Pyrimidine metabolism; UMP biosynthesis via salvage pathway; UMP from uracil: step 1/1.</text>
</comment>
<comment type="subunit">
    <text>Homodimer.</text>
</comment>
<comment type="similarity">
    <text evidence="1">Belongs to the UPRTase family.</text>
</comment>
<accession>P70881</accession>
<sequence>MGKVYVFDHPLIQHKLTYIRDKNTGTKEFRELVDEVATLMAFEITRDLPLEEVEIETPVSKARAKVIAGKKLGVIPILRAGIGMVDGILKLIPAAKVGHIGLYRDPQTLKPVEYYVKLPSDVEERDFIIVDPMLATGGSAVAAIDALKKRGAKSIKFMCLIAAPGRVKAVETAHPDVDIYIAALDERLNDHGYIVPGLGDAGDRLFGTK</sequence>
<dbReference type="EC" id="2.4.2.9" evidence="1"/>
<dbReference type="EMBL" id="X99545">
    <property type="protein sequence ID" value="CAA67884.1"/>
    <property type="molecule type" value="Genomic_DNA"/>
</dbReference>
<dbReference type="PIR" id="T48896">
    <property type="entry name" value="T48896"/>
</dbReference>
<dbReference type="PDB" id="1I5E">
    <property type="method" value="X-ray"/>
    <property type="resolution" value="3.00 A"/>
    <property type="chains" value="A/B=1-209"/>
</dbReference>
<dbReference type="PDBsum" id="1I5E"/>
<dbReference type="SMR" id="P70881"/>
<dbReference type="BRENDA" id="2.4.2.9">
    <property type="organism ID" value="642"/>
</dbReference>
<dbReference type="UniPathway" id="UPA00574">
    <property type="reaction ID" value="UER00636"/>
</dbReference>
<dbReference type="EvolutionaryTrace" id="P70881"/>
<dbReference type="GO" id="GO:0005525">
    <property type="term" value="F:GTP binding"/>
    <property type="evidence" value="ECO:0007669"/>
    <property type="project" value="UniProtKB-KW"/>
</dbReference>
<dbReference type="GO" id="GO:0000287">
    <property type="term" value="F:magnesium ion binding"/>
    <property type="evidence" value="ECO:0007669"/>
    <property type="project" value="UniProtKB-UniRule"/>
</dbReference>
<dbReference type="GO" id="GO:0004845">
    <property type="term" value="F:uracil phosphoribosyltransferase activity"/>
    <property type="evidence" value="ECO:0007669"/>
    <property type="project" value="UniProtKB-UniRule"/>
</dbReference>
<dbReference type="GO" id="GO:0044206">
    <property type="term" value="P:UMP salvage"/>
    <property type="evidence" value="ECO:0007669"/>
    <property type="project" value="UniProtKB-UniRule"/>
</dbReference>
<dbReference type="GO" id="GO:0006223">
    <property type="term" value="P:uracil salvage"/>
    <property type="evidence" value="ECO:0007669"/>
    <property type="project" value="InterPro"/>
</dbReference>
<dbReference type="CDD" id="cd06223">
    <property type="entry name" value="PRTases_typeI"/>
    <property type="match status" value="1"/>
</dbReference>
<dbReference type="FunFam" id="3.40.50.2020:FF:000003">
    <property type="entry name" value="Uracil phosphoribosyltransferase"/>
    <property type="match status" value="1"/>
</dbReference>
<dbReference type="Gene3D" id="3.40.50.2020">
    <property type="match status" value="1"/>
</dbReference>
<dbReference type="HAMAP" id="MF_01218_B">
    <property type="entry name" value="Upp_B"/>
    <property type="match status" value="1"/>
</dbReference>
<dbReference type="InterPro" id="IPR000836">
    <property type="entry name" value="PRibTrfase_dom"/>
</dbReference>
<dbReference type="InterPro" id="IPR029057">
    <property type="entry name" value="PRTase-like"/>
</dbReference>
<dbReference type="InterPro" id="IPR034332">
    <property type="entry name" value="Upp_B"/>
</dbReference>
<dbReference type="InterPro" id="IPR050054">
    <property type="entry name" value="UPRTase/APRTase"/>
</dbReference>
<dbReference type="InterPro" id="IPR005765">
    <property type="entry name" value="Ura_phspho_trans"/>
</dbReference>
<dbReference type="NCBIfam" id="NF001097">
    <property type="entry name" value="PRK00129.1"/>
    <property type="match status" value="1"/>
</dbReference>
<dbReference type="NCBIfam" id="TIGR01091">
    <property type="entry name" value="upp"/>
    <property type="match status" value="1"/>
</dbReference>
<dbReference type="PANTHER" id="PTHR32315">
    <property type="entry name" value="ADENINE PHOSPHORIBOSYLTRANSFERASE"/>
    <property type="match status" value="1"/>
</dbReference>
<dbReference type="PANTHER" id="PTHR32315:SF4">
    <property type="entry name" value="URACIL PHOSPHORIBOSYLTRANSFERASE, CHLOROPLASTIC"/>
    <property type="match status" value="1"/>
</dbReference>
<dbReference type="Pfam" id="PF14681">
    <property type="entry name" value="UPRTase"/>
    <property type="match status" value="1"/>
</dbReference>
<dbReference type="SUPFAM" id="SSF53271">
    <property type="entry name" value="PRTase-like"/>
    <property type="match status" value="1"/>
</dbReference>
<proteinExistence type="evidence at protein level"/>
<feature type="chain" id="PRO_0000120795" description="Uracil phosphoribosyltransferase">
    <location>
        <begin position="1"/>
        <end position="209"/>
    </location>
</feature>
<feature type="binding site" evidence="1">
    <location>
        <position position="79"/>
    </location>
    <ligand>
        <name>5-phospho-alpha-D-ribose 1-diphosphate</name>
        <dbReference type="ChEBI" id="CHEBI:58017"/>
    </ligand>
</feature>
<feature type="binding site" evidence="1">
    <location>
        <position position="104"/>
    </location>
    <ligand>
        <name>5-phospho-alpha-D-ribose 1-diphosphate</name>
        <dbReference type="ChEBI" id="CHEBI:58017"/>
    </ligand>
</feature>
<feature type="binding site" evidence="1">
    <location>
        <begin position="131"/>
        <end position="139"/>
    </location>
    <ligand>
        <name>5-phospho-alpha-D-ribose 1-diphosphate</name>
        <dbReference type="ChEBI" id="CHEBI:58017"/>
    </ligand>
</feature>
<feature type="binding site">
    <location>
        <position position="194"/>
    </location>
    <ligand>
        <name>uracil</name>
        <dbReference type="ChEBI" id="CHEBI:17568"/>
    </ligand>
</feature>
<feature type="binding site">
    <location>
        <begin position="199"/>
        <end position="201"/>
    </location>
    <ligand>
        <name>uracil</name>
        <dbReference type="ChEBI" id="CHEBI:17568"/>
    </ligand>
</feature>
<feature type="binding site" evidence="1">
    <location>
        <position position="200"/>
    </location>
    <ligand>
        <name>5-phospho-alpha-D-ribose 1-diphosphate</name>
        <dbReference type="ChEBI" id="CHEBI:58017"/>
    </ligand>
</feature>
<feature type="strand" evidence="3">
    <location>
        <begin position="4"/>
        <end position="6"/>
    </location>
</feature>
<feature type="helix" evidence="3">
    <location>
        <begin position="10"/>
        <end position="20"/>
    </location>
</feature>
<feature type="helix" evidence="3">
    <location>
        <begin position="26"/>
        <end position="44"/>
    </location>
</feature>
<feature type="helix" evidence="3">
    <location>
        <begin position="45"/>
        <end position="47"/>
    </location>
</feature>
<feature type="strand" evidence="3">
    <location>
        <begin position="50"/>
        <end position="56"/>
    </location>
</feature>
<feature type="strand" evidence="3">
    <location>
        <begin position="61"/>
        <end position="67"/>
    </location>
</feature>
<feature type="strand" evidence="3">
    <location>
        <begin position="72"/>
        <end position="77"/>
    </location>
</feature>
<feature type="helix" evidence="3">
    <location>
        <begin position="80"/>
        <end position="84"/>
    </location>
</feature>
<feature type="helix" evidence="3">
    <location>
        <begin position="85"/>
        <end position="91"/>
    </location>
</feature>
<feature type="strand" evidence="3">
    <location>
        <begin position="95"/>
        <end position="97"/>
    </location>
</feature>
<feature type="strand" evidence="3">
    <location>
        <begin position="99"/>
        <end position="103"/>
    </location>
</feature>
<feature type="strand" evidence="3">
    <location>
        <begin position="112"/>
        <end position="117"/>
    </location>
</feature>
<feature type="turn" evidence="3">
    <location>
        <begin position="120"/>
        <end position="124"/>
    </location>
</feature>
<feature type="strand" evidence="3">
    <location>
        <begin position="125"/>
        <end position="130"/>
    </location>
</feature>
<feature type="strand" evidence="3">
    <location>
        <begin position="132"/>
        <end position="137"/>
    </location>
</feature>
<feature type="helix" evidence="3">
    <location>
        <begin position="138"/>
        <end position="149"/>
    </location>
</feature>
<feature type="strand" evidence="3">
    <location>
        <begin position="155"/>
        <end position="158"/>
    </location>
</feature>
<feature type="strand" evidence="3">
    <location>
        <begin position="160"/>
        <end position="162"/>
    </location>
</feature>
<feature type="helix" evidence="3">
    <location>
        <begin position="164"/>
        <end position="173"/>
    </location>
</feature>
<feature type="strand" evidence="3">
    <location>
        <begin position="178"/>
        <end position="184"/>
    </location>
</feature>
<feature type="strand" evidence="3">
    <location>
        <begin position="194"/>
        <end position="197"/>
    </location>
</feature>
<feature type="helix" evidence="3">
    <location>
        <begin position="201"/>
        <end position="206"/>
    </location>
</feature>
<gene>
    <name evidence="1" type="primary">upp</name>
</gene>
<keyword id="KW-0002">3D-structure</keyword>
<keyword id="KW-0021">Allosteric enzyme</keyword>
<keyword id="KW-0328">Glycosyltransferase</keyword>
<keyword id="KW-0342">GTP-binding</keyword>
<keyword id="KW-0460">Magnesium</keyword>
<keyword id="KW-0547">Nucleotide-binding</keyword>
<keyword id="KW-0808">Transferase</keyword>